<keyword id="KW-0997">Cell inner membrane</keyword>
<keyword id="KW-1003">Cell membrane</keyword>
<keyword id="KW-0406">Ion transport</keyword>
<keyword id="KW-0472">Membrane</keyword>
<keyword id="KW-0769">Symport</keyword>
<keyword id="KW-0812">Transmembrane</keyword>
<keyword id="KW-1133">Transmembrane helix</keyword>
<keyword id="KW-0813">Transport</keyword>
<gene>
    <name evidence="1" type="primary">mntH</name>
    <name type="ordered locus">ECIAI39_2538</name>
</gene>
<accession>B7NPS9</accession>
<sequence length="412" mass="44194">MTNYRVESSSGRAARKMRLALMGPAFIAAIGYIDPGNFATNIQAGASFGYQLLWVVVWANLMAMLIQILSAKLGIATGKNLAEQIRDHYPRPVVWFYWVQAEIIAMATDLAEFIGAAIGFKLILGVSLLQGAVLTGIATFLILMLQRRGQKPLEKVIGGLLLFVAAAYIVELIFSQPNLAQLGKGMVIPSLPTSEAVFLAAGVLGATIMPHVIYLHSSLTQHLHGGSRQQRYSATKWDVAIAMTIAGFVNLAMMATAAAAFHFSGHTGVADLDEAYLTLQPLLSHAAATVFGLSLVAAGLSSTVVGTLAGQVVMQGFIRFHIPLWVRRTVTMLPSFIVILMGLDPTRILVMSQVLLSFGIALALVPLLIFTSDSKLMGDLVNSKRVKQTGWVIVVLVVALNIWLLVGTALGL</sequence>
<proteinExistence type="inferred from homology"/>
<comment type="function">
    <text evidence="1">H(+)-stimulated, divalent metal cation uptake system.</text>
</comment>
<comment type="subcellular location">
    <subcellularLocation>
        <location evidence="1">Cell inner membrane</location>
        <topology evidence="1">Multi-pass membrane protein</topology>
    </subcellularLocation>
</comment>
<comment type="similarity">
    <text evidence="1">Belongs to the NRAMP family.</text>
</comment>
<feature type="chain" id="PRO_1000191750" description="Divalent metal cation transporter MntH">
    <location>
        <begin position="1"/>
        <end position="412"/>
    </location>
</feature>
<feature type="topological domain" description="Cytoplasmic" evidence="1">
    <location>
        <begin position="1"/>
        <end position="19"/>
    </location>
</feature>
<feature type="transmembrane region" description="Helical" evidence="1">
    <location>
        <begin position="20"/>
        <end position="39"/>
    </location>
</feature>
<feature type="topological domain" description="Periplasmic" evidence="1">
    <location>
        <begin position="40"/>
        <end position="51"/>
    </location>
</feature>
<feature type="transmembrane region" description="Helical" evidence="1">
    <location>
        <begin position="52"/>
        <end position="71"/>
    </location>
</feature>
<feature type="topological domain" description="Cytoplasmic" evidence="1">
    <location>
        <begin position="72"/>
        <end position="95"/>
    </location>
</feature>
<feature type="transmembrane region" description="Helical" evidence="1">
    <location>
        <begin position="96"/>
        <end position="118"/>
    </location>
</feature>
<feature type="topological domain" description="Periplasmic" evidence="1">
    <location>
        <begin position="119"/>
        <end position="125"/>
    </location>
</feature>
<feature type="transmembrane region" description="Helical" evidence="1">
    <location>
        <begin position="126"/>
        <end position="145"/>
    </location>
</feature>
<feature type="topological domain" description="Cytoplasmic" evidence="1">
    <location>
        <begin position="146"/>
        <end position="155"/>
    </location>
</feature>
<feature type="transmembrane region" description="Helical" evidence="1">
    <location>
        <begin position="156"/>
        <end position="175"/>
    </location>
</feature>
<feature type="topological domain" description="Periplasmic" evidence="1">
    <location>
        <begin position="176"/>
        <end position="196"/>
    </location>
</feature>
<feature type="transmembrane region" description="Helical" evidence="1">
    <location>
        <begin position="197"/>
        <end position="220"/>
    </location>
</feature>
<feature type="topological domain" description="Cytoplasmic" evidence="1">
    <location>
        <begin position="221"/>
        <end position="238"/>
    </location>
</feature>
<feature type="transmembrane region" description="Helical" evidence="1">
    <location>
        <begin position="239"/>
        <end position="258"/>
    </location>
</feature>
<feature type="topological domain" description="Periplasmic" evidence="1">
    <location>
        <begin position="259"/>
        <end position="276"/>
    </location>
</feature>
<feature type="transmembrane region" description="Helical" evidence="1">
    <location>
        <begin position="277"/>
        <end position="297"/>
    </location>
</feature>
<feature type="topological domain" description="Cytoplasmic" evidence="1">
    <location>
        <begin position="298"/>
        <end position="327"/>
    </location>
</feature>
<feature type="transmembrane region" description="Helical" evidence="1">
    <location>
        <begin position="328"/>
        <end position="344"/>
    </location>
</feature>
<feature type="topological domain" description="Periplasmic" evidence="1">
    <location>
        <begin position="345"/>
        <end position="350"/>
    </location>
</feature>
<feature type="transmembrane region" description="Helical" evidence="1">
    <location>
        <begin position="351"/>
        <end position="370"/>
    </location>
</feature>
<feature type="topological domain" description="Cytoplasmic" evidence="1">
    <location>
        <begin position="371"/>
        <end position="387"/>
    </location>
</feature>
<feature type="transmembrane region" description="Helical" evidence="1">
    <location>
        <begin position="388"/>
        <end position="406"/>
    </location>
</feature>
<feature type="topological domain" description="Periplasmic" evidence="1">
    <location>
        <begin position="407"/>
        <end position="412"/>
    </location>
</feature>
<organism>
    <name type="scientific">Escherichia coli O7:K1 (strain IAI39 / ExPEC)</name>
    <dbReference type="NCBI Taxonomy" id="585057"/>
    <lineage>
        <taxon>Bacteria</taxon>
        <taxon>Pseudomonadati</taxon>
        <taxon>Pseudomonadota</taxon>
        <taxon>Gammaproteobacteria</taxon>
        <taxon>Enterobacterales</taxon>
        <taxon>Enterobacteriaceae</taxon>
        <taxon>Escherichia</taxon>
    </lineage>
</organism>
<dbReference type="EMBL" id="CU928164">
    <property type="protein sequence ID" value="CAR18662.1"/>
    <property type="molecule type" value="Genomic_DNA"/>
</dbReference>
<dbReference type="RefSeq" id="WP_000186369.1">
    <property type="nucleotide sequence ID" value="NC_011750.1"/>
</dbReference>
<dbReference type="RefSeq" id="YP_002408490.1">
    <property type="nucleotide sequence ID" value="NC_011750.1"/>
</dbReference>
<dbReference type="SMR" id="B7NPS9"/>
<dbReference type="STRING" id="585057.ECIAI39_2538"/>
<dbReference type="KEGG" id="ect:ECIAI39_2538"/>
<dbReference type="PATRIC" id="fig|585057.6.peg.2642"/>
<dbReference type="HOGENOM" id="CLU_020088_2_0_6"/>
<dbReference type="Proteomes" id="UP000000749">
    <property type="component" value="Chromosome"/>
</dbReference>
<dbReference type="GO" id="GO:0005886">
    <property type="term" value="C:plasma membrane"/>
    <property type="evidence" value="ECO:0007669"/>
    <property type="project" value="UniProtKB-SubCell"/>
</dbReference>
<dbReference type="GO" id="GO:0015086">
    <property type="term" value="F:cadmium ion transmembrane transporter activity"/>
    <property type="evidence" value="ECO:0007669"/>
    <property type="project" value="TreeGrafter"/>
</dbReference>
<dbReference type="GO" id="GO:0005384">
    <property type="term" value="F:manganese ion transmembrane transporter activity"/>
    <property type="evidence" value="ECO:0007669"/>
    <property type="project" value="TreeGrafter"/>
</dbReference>
<dbReference type="GO" id="GO:0046872">
    <property type="term" value="F:metal ion binding"/>
    <property type="evidence" value="ECO:0007669"/>
    <property type="project" value="UniProtKB-UniRule"/>
</dbReference>
<dbReference type="GO" id="GO:0015293">
    <property type="term" value="F:symporter activity"/>
    <property type="evidence" value="ECO:0007669"/>
    <property type="project" value="UniProtKB-UniRule"/>
</dbReference>
<dbReference type="GO" id="GO:0034755">
    <property type="term" value="P:iron ion transmembrane transport"/>
    <property type="evidence" value="ECO:0007669"/>
    <property type="project" value="TreeGrafter"/>
</dbReference>
<dbReference type="HAMAP" id="MF_00221">
    <property type="entry name" value="NRAMP"/>
    <property type="match status" value="1"/>
</dbReference>
<dbReference type="InterPro" id="IPR001046">
    <property type="entry name" value="NRAMP_fam"/>
</dbReference>
<dbReference type="NCBIfam" id="TIGR01197">
    <property type="entry name" value="nramp"/>
    <property type="match status" value="1"/>
</dbReference>
<dbReference type="NCBIfam" id="NF037982">
    <property type="entry name" value="Nramp_1"/>
    <property type="match status" value="1"/>
</dbReference>
<dbReference type="NCBIfam" id="NF001923">
    <property type="entry name" value="PRK00701.1"/>
    <property type="match status" value="1"/>
</dbReference>
<dbReference type="PANTHER" id="PTHR11706:SF33">
    <property type="entry name" value="NATURAL RESISTANCE-ASSOCIATED MACROPHAGE PROTEIN 2"/>
    <property type="match status" value="1"/>
</dbReference>
<dbReference type="PANTHER" id="PTHR11706">
    <property type="entry name" value="SOLUTE CARRIER PROTEIN FAMILY 11 MEMBER"/>
    <property type="match status" value="1"/>
</dbReference>
<dbReference type="Pfam" id="PF01566">
    <property type="entry name" value="Nramp"/>
    <property type="match status" value="1"/>
</dbReference>
<dbReference type="PRINTS" id="PR00447">
    <property type="entry name" value="NATRESASSCMP"/>
</dbReference>
<name>MNTH_ECO7I</name>
<evidence type="ECO:0000255" key="1">
    <source>
        <dbReference type="HAMAP-Rule" id="MF_00221"/>
    </source>
</evidence>
<reference key="1">
    <citation type="journal article" date="2009" name="PLoS Genet.">
        <title>Organised genome dynamics in the Escherichia coli species results in highly diverse adaptive paths.</title>
        <authorList>
            <person name="Touchon M."/>
            <person name="Hoede C."/>
            <person name="Tenaillon O."/>
            <person name="Barbe V."/>
            <person name="Baeriswyl S."/>
            <person name="Bidet P."/>
            <person name="Bingen E."/>
            <person name="Bonacorsi S."/>
            <person name="Bouchier C."/>
            <person name="Bouvet O."/>
            <person name="Calteau A."/>
            <person name="Chiapello H."/>
            <person name="Clermont O."/>
            <person name="Cruveiller S."/>
            <person name="Danchin A."/>
            <person name="Diard M."/>
            <person name="Dossat C."/>
            <person name="Karoui M.E."/>
            <person name="Frapy E."/>
            <person name="Garry L."/>
            <person name="Ghigo J.M."/>
            <person name="Gilles A.M."/>
            <person name="Johnson J."/>
            <person name="Le Bouguenec C."/>
            <person name="Lescat M."/>
            <person name="Mangenot S."/>
            <person name="Martinez-Jehanne V."/>
            <person name="Matic I."/>
            <person name="Nassif X."/>
            <person name="Oztas S."/>
            <person name="Petit M.A."/>
            <person name="Pichon C."/>
            <person name="Rouy Z."/>
            <person name="Ruf C.S."/>
            <person name="Schneider D."/>
            <person name="Tourret J."/>
            <person name="Vacherie B."/>
            <person name="Vallenet D."/>
            <person name="Medigue C."/>
            <person name="Rocha E.P.C."/>
            <person name="Denamur E."/>
        </authorList>
    </citation>
    <scope>NUCLEOTIDE SEQUENCE [LARGE SCALE GENOMIC DNA]</scope>
    <source>
        <strain>IAI39 / ExPEC</strain>
    </source>
</reference>
<protein>
    <recommendedName>
        <fullName evidence="1">Divalent metal cation transporter MntH</fullName>
    </recommendedName>
</protein>